<proteinExistence type="evidence at protein level"/>
<reference key="1">
    <citation type="journal article" date="1997" name="J. Allergy Clin. Immunol.">
        <title>Cloning and expression of the panallergen profilin and the major allergen (Ole e 1) from olive tree pollen.</title>
        <authorList>
            <person name="Asturias J.A."/>
            <person name="Arilla M.C."/>
            <person name="Gomez-Bayon N."/>
            <person name="Martinez J."/>
            <person name="Martinez A."/>
            <person name="Palacios R."/>
        </authorList>
    </citation>
    <scope>NUCLEOTIDE SEQUENCE [MRNA]</scope>
    <source>
        <tissue>Pollen</tissue>
    </source>
</reference>
<reference key="2">
    <citation type="journal article" date="2012" name="PLoS ONE">
        <title>Characterization of profilin polymorphism in pollen with a focus on multifunctionality.</title>
        <authorList>
            <person name="Jimenez-Lopez J.C."/>
            <person name="Morales S."/>
            <person name="Castro A.J."/>
            <person name="Volkmann D."/>
            <person name="Rodriguez-Garcia M.I."/>
            <person name="Alche Jde D."/>
        </authorList>
    </citation>
    <scope>POLYMORPHISM</scope>
</reference>
<reference key="3">
    <citation type="journal article" date="2013" name="PLoS ONE">
        <title>Analysis of the effects of polymorphism on pollen profilin structural functionality and the generation of conformational, T- and B-cell epitopes.</title>
        <authorList>
            <person name="Jimenez-Lopez J.C."/>
            <person name="Rodriguez-Garcia M.I."/>
            <person name="Alche J.D."/>
        </authorList>
    </citation>
    <scope>3D-STRUCTURE MODELING</scope>
    <scope>DISULFIDE BOND</scope>
</reference>
<reference key="4">
    <citation type="journal article" date="2012" name="Talanta">
        <title>Analysis of olive allergens.</title>
        <authorList>
            <person name="Esteve C."/>
            <person name="Montealegre C."/>
            <person name="Marina M.L."/>
            <person name="Garcia M.C."/>
        </authorList>
    </citation>
    <scope>REVIEW</scope>
    <scope>NOMENCLATURE</scope>
</reference>
<keyword id="KW-0009">Actin-binding</keyword>
<keyword id="KW-0020">Allergen</keyword>
<keyword id="KW-0963">Cytoplasm</keyword>
<keyword id="KW-0206">Cytoskeleton</keyword>
<keyword id="KW-1015">Disulfide bond</keyword>
<keyword id="KW-0597">Phosphoprotein</keyword>
<evidence type="ECO:0000250" key="1"/>
<evidence type="ECO:0000305" key="2"/>
<evidence type="ECO:0000305" key="3">
    <source>
    </source>
</evidence>
<feature type="initiator methionine" description="Removed" evidence="1">
    <location>
        <position position="1"/>
    </location>
</feature>
<feature type="chain" id="PRO_0000199657" description="Profilin-2">
    <location>
        <begin position="2"/>
        <end position="134"/>
    </location>
</feature>
<feature type="short sequence motif" description="Involved in PIP2 interaction">
    <location>
        <begin position="84"/>
        <end position="100"/>
    </location>
</feature>
<feature type="modified residue" description="Phosphothreonine" evidence="1">
    <location>
        <position position="114"/>
    </location>
</feature>
<feature type="disulfide bond" evidence="3">
    <location>
        <begin position="13"/>
        <end position="118"/>
    </location>
</feature>
<sequence length="134" mass="14427">MSWQAYVDDHLMCDIEGHEGHRLTAAAIVGHDGSVWAQSATFPQFKPEEMNGIMTDFNEPGHLAPTGLHLGGTKYMVIQGEAGAVIRGKKGSGGITIKKTGQALVFGIYEEPVTPGQCNMVVERLGDYLLEQGL</sequence>
<protein>
    <recommendedName>
        <fullName>Profilin-2</fullName>
    </recommendedName>
    <alternativeName>
        <fullName>Pollen allergen Ole e 2</fullName>
    </alternativeName>
    <allergenName>Ole e 2</allergenName>
</protein>
<gene>
    <name type="primary">PRO2</name>
</gene>
<organism>
    <name type="scientific">Olea europaea</name>
    <name type="common">Common olive</name>
    <dbReference type="NCBI Taxonomy" id="4146"/>
    <lineage>
        <taxon>Eukaryota</taxon>
        <taxon>Viridiplantae</taxon>
        <taxon>Streptophyta</taxon>
        <taxon>Embryophyta</taxon>
        <taxon>Tracheophyta</taxon>
        <taxon>Spermatophyta</taxon>
        <taxon>Magnoliopsida</taxon>
        <taxon>eudicotyledons</taxon>
        <taxon>Gunneridae</taxon>
        <taxon>Pentapetalae</taxon>
        <taxon>asterids</taxon>
        <taxon>lamiids</taxon>
        <taxon>Lamiales</taxon>
        <taxon>Oleaceae</taxon>
        <taxon>Oleeae</taxon>
        <taxon>Olea</taxon>
    </lineage>
</organism>
<name>PROFB_OLEEU</name>
<comment type="function">
    <text evidence="1">Binds to actin and affects the structure of the cytoskeleton. At high concentrations, profilin prevents the polymerization of actin, whereas it enhances it at low concentrations. By binding to PIP2, it inhibits the formation of IP3 and DG (By similarity).</text>
</comment>
<comment type="subunit">
    <text>Occurs in many kinds of cells as a complex with monomeric actin in a 1:1 ratio.</text>
</comment>
<comment type="subcellular location">
    <subcellularLocation>
        <location evidence="1">Cytoplasm</location>
        <location evidence="1">Cytoskeleton</location>
    </subcellularLocation>
</comment>
<comment type="PTM">
    <text evidence="1">Phosphorylated by MAP kinases.</text>
</comment>
<comment type="polymorphism">
    <text>Several isoforms of the allergen exist due to polymorphism.</text>
</comment>
<comment type="allergen">
    <text>Causes an allergic reaction in human.</text>
</comment>
<comment type="miscellaneous">
    <text evidence="3">The variability of the residues taking part of IgE-binding epitopes might be responsible of the difference in cross-reactivity among olive pollen cultivars, and between distantly related pollen species, leading to a variable range of allergy reactions among atopic patients.</text>
</comment>
<comment type="similarity">
    <text evidence="2">Belongs to the profilin family.</text>
</comment>
<accession>O24170</accession>
<dbReference type="EMBL" id="Y12429">
    <property type="protein sequence ID" value="CAA73039.1"/>
    <property type="molecule type" value="mRNA"/>
</dbReference>
<dbReference type="SMR" id="O24170"/>
<dbReference type="Allergome" id="3383">
    <property type="allergen name" value="Ole e 2.0101"/>
</dbReference>
<dbReference type="Allergome" id="490">
    <property type="allergen name" value="Ole e 2"/>
</dbReference>
<dbReference type="GO" id="GO:0005938">
    <property type="term" value="C:cell cortex"/>
    <property type="evidence" value="ECO:0007669"/>
    <property type="project" value="TreeGrafter"/>
</dbReference>
<dbReference type="GO" id="GO:0005856">
    <property type="term" value="C:cytoskeleton"/>
    <property type="evidence" value="ECO:0007669"/>
    <property type="project" value="UniProtKB-SubCell"/>
</dbReference>
<dbReference type="GO" id="GO:0003785">
    <property type="term" value="F:actin monomer binding"/>
    <property type="evidence" value="ECO:0007669"/>
    <property type="project" value="TreeGrafter"/>
</dbReference>
<dbReference type="CDD" id="cd00148">
    <property type="entry name" value="PROF"/>
    <property type="match status" value="1"/>
</dbReference>
<dbReference type="FunFam" id="3.30.450.30:FF:000001">
    <property type="entry name" value="Profilin"/>
    <property type="match status" value="1"/>
</dbReference>
<dbReference type="Gene3D" id="3.30.450.30">
    <property type="entry name" value="Dynein light chain 2a, cytoplasmic"/>
    <property type="match status" value="1"/>
</dbReference>
<dbReference type="InterPro" id="IPR048278">
    <property type="entry name" value="PFN"/>
</dbReference>
<dbReference type="InterPro" id="IPR005455">
    <property type="entry name" value="PFN_euk"/>
</dbReference>
<dbReference type="InterPro" id="IPR036140">
    <property type="entry name" value="PFN_sf"/>
</dbReference>
<dbReference type="InterPro" id="IPR027310">
    <property type="entry name" value="Profilin_CS"/>
</dbReference>
<dbReference type="PANTHER" id="PTHR11604">
    <property type="entry name" value="PROFILIN"/>
    <property type="match status" value="1"/>
</dbReference>
<dbReference type="PANTHER" id="PTHR11604:SF25">
    <property type="entry name" value="PROFILIN-5"/>
    <property type="match status" value="1"/>
</dbReference>
<dbReference type="Pfam" id="PF00235">
    <property type="entry name" value="Profilin"/>
    <property type="match status" value="1"/>
</dbReference>
<dbReference type="PRINTS" id="PR00392">
    <property type="entry name" value="PROFILIN"/>
</dbReference>
<dbReference type="PRINTS" id="PR01640">
    <property type="entry name" value="PROFILINPLNT"/>
</dbReference>
<dbReference type="SMART" id="SM00392">
    <property type="entry name" value="PROF"/>
    <property type="match status" value="1"/>
</dbReference>
<dbReference type="SUPFAM" id="SSF55770">
    <property type="entry name" value="Profilin (actin-binding protein)"/>
    <property type="match status" value="1"/>
</dbReference>
<dbReference type="PROSITE" id="PS00414">
    <property type="entry name" value="PROFILIN"/>
    <property type="match status" value="1"/>
</dbReference>